<evidence type="ECO:0000255" key="1">
    <source>
        <dbReference type="HAMAP-Rule" id="MF_00191"/>
    </source>
</evidence>
<dbReference type="EC" id="1.17.7.4" evidence="1"/>
<dbReference type="EMBL" id="CP001634">
    <property type="protein sequence ID" value="ACR78938.1"/>
    <property type="molecule type" value="Genomic_DNA"/>
</dbReference>
<dbReference type="RefSeq" id="WP_012744725.1">
    <property type="nucleotide sequence ID" value="NC_012785.1"/>
</dbReference>
<dbReference type="SMR" id="C5CIU9"/>
<dbReference type="STRING" id="521045.Kole_0213"/>
<dbReference type="KEGG" id="kol:Kole_0213"/>
<dbReference type="eggNOG" id="COG0761">
    <property type="taxonomic scope" value="Bacteria"/>
</dbReference>
<dbReference type="HOGENOM" id="CLU_027486_0_1_0"/>
<dbReference type="UniPathway" id="UPA00056">
    <property type="reaction ID" value="UER00097"/>
</dbReference>
<dbReference type="UniPathway" id="UPA00059">
    <property type="reaction ID" value="UER00105"/>
</dbReference>
<dbReference type="Proteomes" id="UP000002382">
    <property type="component" value="Chromosome"/>
</dbReference>
<dbReference type="GO" id="GO:0051539">
    <property type="term" value="F:4 iron, 4 sulfur cluster binding"/>
    <property type="evidence" value="ECO:0007669"/>
    <property type="project" value="UniProtKB-UniRule"/>
</dbReference>
<dbReference type="GO" id="GO:0051745">
    <property type="term" value="F:4-hydroxy-3-methylbut-2-enyl diphosphate reductase activity"/>
    <property type="evidence" value="ECO:0007669"/>
    <property type="project" value="UniProtKB-UniRule"/>
</dbReference>
<dbReference type="GO" id="GO:0046872">
    <property type="term" value="F:metal ion binding"/>
    <property type="evidence" value="ECO:0007669"/>
    <property type="project" value="UniProtKB-KW"/>
</dbReference>
<dbReference type="GO" id="GO:0050992">
    <property type="term" value="P:dimethylallyl diphosphate biosynthetic process"/>
    <property type="evidence" value="ECO:0007669"/>
    <property type="project" value="UniProtKB-UniRule"/>
</dbReference>
<dbReference type="GO" id="GO:0019288">
    <property type="term" value="P:isopentenyl diphosphate biosynthetic process, methylerythritol 4-phosphate pathway"/>
    <property type="evidence" value="ECO:0007669"/>
    <property type="project" value="UniProtKB-UniRule"/>
</dbReference>
<dbReference type="GO" id="GO:0016114">
    <property type="term" value="P:terpenoid biosynthetic process"/>
    <property type="evidence" value="ECO:0007669"/>
    <property type="project" value="UniProtKB-UniRule"/>
</dbReference>
<dbReference type="CDD" id="cd13944">
    <property type="entry name" value="lytB_ispH"/>
    <property type="match status" value="1"/>
</dbReference>
<dbReference type="Gene3D" id="3.40.50.11270">
    <property type="match status" value="1"/>
</dbReference>
<dbReference type="Gene3D" id="3.40.1010.20">
    <property type="entry name" value="4-hydroxy-3-methylbut-2-enyl diphosphate reductase, catalytic domain"/>
    <property type="match status" value="2"/>
</dbReference>
<dbReference type="HAMAP" id="MF_00191">
    <property type="entry name" value="IspH"/>
    <property type="match status" value="1"/>
</dbReference>
<dbReference type="InterPro" id="IPR003451">
    <property type="entry name" value="LytB/IspH"/>
</dbReference>
<dbReference type="NCBIfam" id="TIGR00216">
    <property type="entry name" value="ispH_lytB"/>
    <property type="match status" value="1"/>
</dbReference>
<dbReference type="PANTHER" id="PTHR30426">
    <property type="entry name" value="4-HYDROXY-3-METHYLBUT-2-ENYL DIPHOSPHATE REDUCTASE"/>
    <property type="match status" value="1"/>
</dbReference>
<dbReference type="PANTHER" id="PTHR30426:SF0">
    <property type="entry name" value="4-HYDROXY-3-METHYLBUT-2-ENYL DIPHOSPHATE REDUCTASE"/>
    <property type="match status" value="1"/>
</dbReference>
<dbReference type="Pfam" id="PF02401">
    <property type="entry name" value="LYTB"/>
    <property type="match status" value="1"/>
</dbReference>
<organism>
    <name type="scientific">Kosmotoga olearia (strain ATCC BAA-1733 / DSM 21960 / TBF 19.5.1)</name>
    <dbReference type="NCBI Taxonomy" id="521045"/>
    <lineage>
        <taxon>Bacteria</taxon>
        <taxon>Thermotogati</taxon>
        <taxon>Thermotogota</taxon>
        <taxon>Thermotogae</taxon>
        <taxon>Kosmotogales</taxon>
        <taxon>Kosmotogaceae</taxon>
        <taxon>Kosmotoga</taxon>
    </lineage>
</organism>
<comment type="function">
    <text evidence="1">Catalyzes the conversion of 1-hydroxy-2-methyl-2-(E)-butenyl 4-diphosphate (HMBPP) into a mixture of isopentenyl diphosphate (IPP) and dimethylallyl diphosphate (DMAPP). Acts in the terminal step of the DOXP/MEP pathway for isoprenoid precursor biosynthesis.</text>
</comment>
<comment type="catalytic activity">
    <reaction evidence="1">
        <text>isopentenyl diphosphate + 2 oxidized [2Fe-2S]-[ferredoxin] + H2O = (2E)-4-hydroxy-3-methylbut-2-enyl diphosphate + 2 reduced [2Fe-2S]-[ferredoxin] + 2 H(+)</text>
        <dbReference type="Rhea" id="RHEA:24488"/>
        <dbReference type="Rhea" id="RHEA-COMP:10000"/>
        <dbReference type="Rhea" id="RHEA-COMP:10001"/>
        <dbReference type="ChEBI" id="CHEBI:15377"/>
        <dbReference type="ChEBI" id="CHEBI:15378"/>
        <dbReference type="ChEBI" id="CHEBI:33737"/>
        <dbReference type="ChEBI" id="CHEBI:33738"/>
        <dbReference type="ChEBI" id="CHEBI:128753"/>
        <dbReference type="ChEBI" id="CHEBI:128769"/>
        <dbReference type="EC" id="1.17.7.4"/>
    </reaction>
</comment>
<comment type="catalytic activity">
    <reaction evidence="1">
        <text>dimethylallyl diphosphate + 2 oxidized [2Fe-2S]-[ferredoxin] + H2O = (2E)-4-hydroxy-3-methylbut-2-enyl diphosphate + 2 reduced [2Fe-2S]-[ferredoxin] + 2 H(+)</text>
        <dbReference type="Rhea" id="RHEA:24825"/>
        <dbReference type="Rhea" id="RHEA-COMP:10000"/>
        <dbReference type="Rhea" id="RHEA-COMP:10001"/>
        <dbReference type="ChEBI" id="CHEBI:15377"/>
        <dbReference type="ChEBI" id="CHEBI:15378"/>
        <dbReference type="ChEBI" id="CHEBI:33737"/>
        <dbReference type="ChEBI" id="CHEBI:33738"/>
        <dbReference type="ChEBI" id="CHEBI:57623"/>
        <dbReference type="ChEBI" id="CHEBI:128753"/>
        <dbReference type="EC" id="1.17.7.4"/>
    </reaction>
</comment>
<comment type="cofactor">
    <cofactor evidence="1">
        <name>[4Fe-4S] cluster</name>
        <dbReference type="ChEBI" id="CHEBI:49883"/>
    </cofactor>
    <text evidence="1">Binds 1 [4Fe-4S] cluster per subunit.</text>
</comment>
<comment type="pathway">
    <text evidence="1">Isoprenoid biosynthesis; dimethylallyl diphosphate biosynthesis; dimethylallyl diphosphate from (2E)-4-hydroxy-3-methylbutenyl diphosphate: step 1/1.</text>
</comment>
<comment type="pathway">
    <text evidence="1">Isoprenoid biosynthesis; isopentenyl diphosphate biosynthesis via DXP pathway; isopentenyl diphosphate from 1-deoxy-D-xylulose 5-phosphate: step 6/6.</text>
</comment>
<comment type="similarity">
    <text evidence="1">Belongs to the IspH family.</text>
</comment>
<keyword id="KW-0004">4Fe-4S</keyword>
<keyword id="KW-0408">Iron</keyword>
<keyword id="KW-0411">Iron-sulfur</keyword>
<keyword id="KW-0414">Isoprene biosynthesis</keyword>
<keyword id="KW-0479">Metal-binding</keyword>
<keyword id="KW-0560">Oxidoreductase</keyword>
<keyword id="KW-1185">Reference proteome</keyword>
<accession>C5CIU9</accession>
<proteinExistence type="inferred from homology"/>
<name>ISPH_KOSOT</name>
<sequence length="298" mass="33343">MKIVLAESLGFCYGVNRAVEATKRLLKEKRDARVIGDIVHNEIVMKKLKDMGLKVYPDLSSIDFSDTAENSVAIIRAHGASPDVEDFLKRRFGYVVDLTCPIVYNVFSLAKDLEKKGYFIVIFGKKDHAEVKALCGRLNDYLIVEPGYDFETIKAFLREKKPKKVALISQTTMNSESFEKLAEKLLKLEGIEVSVNNTICNVTINREKMAIHLAQTCDAVVVVGGKRSSNTGKLAKIVESHGKRAFHVQNPEQLPDLSIYRKVGIISGTSTPKEQILKILDYIKFTYEGEVIRNGGEV</sequence>
<gene>
    <name evidence="1" type="primary">ispH</name>
    <name type="ordered locus">Kole_0213</name>
</gene>
<reference key="1">
    <citation type="submission" date="2009-06" db="EMBL/GenBank/DDBJ databases">
        <title>Complete sequence of Thermotogales bacterium TBF 19.5.1.</title>
        <authorList>
            <consortium name="US DOE Joint Genome Institute"/>
            <person name="Lucas S."/>
            <person name="Copeland A."/>
            <person name="Lapidus A."/>
            <person name="Glavina del Rio T."/>
            <person name="Tice H."/>
            <person name="Bruce D."/>
            <person name="Goodwin L."/>
            <person name="Pitluck S."/>
            <person name="Chertkov O."/>
            <person name="Brettin T."/>
            <person name="Detter J.C."/>
            <person name="Han C."/>
            <person name="Schmutz J."/>
            <person name="Larimer F."/>
            <person name="Land M."/>
            <person name="Hauser L."/>
            <person name="Kyrpides N."/>
            <person name="Ovchinnikova G."/>
            <person name="Noll K."/>
        </authorList>
    </citation>
    <scope>NUCLEOTIDE SEQUENCE [LARGE SCALE GENOMIC DNA]</scope>
    <source>
        <strain>ATCC BAA-1733 / DSM 21960 / TBF 19.5.1</strain>
    </source>
</reference>
<feature type="chain" id="PRO_1000204007" description="4-hydroxy-3-methylbut-2-enyl diphosphate reductase">
    <location>
        <begin position="1"/>
        <end position="298"/>
    </location>
</feature>
<feature type="active site" description="Proton donor" evidence="1">
    <location>
        <position position="130"/>
    </location>
</feature>
<feature type="binding site" evidence="1">
    <location>
        <position position="12"/>
    </location>
    <ligand>
        <name>[4Fe-4S] cluster</name>
        <dbReference type="ChEBI" id="CHEBI:49883"/>
    </ligand>
</feature>
<feature type="binding site" evidence="1">
    <location>
        <position position="40"/>
    </location>
    <ligand>
        <name>(2E)-4-hydroxy-3-methylbut-2-enyl diphosphate</name>
        <dbReference type="ChEBI" id="CHEBI:128753"/>
    </ligand>
</feature>
<feature type="binding site" evidence="1">
    <location>
        <position position="40"/>
    </location>
    <ligand>
        <name>dimethylallyl diphosphate</name>
        <dbReference type="ChEBI" id="CHEBI:57623"/>
    </ligand>
</feature>
<feature type="binding site" evidence="1">
    <location>
        <position position="40"/>
    </location>
    <ligand>
        <name>isopentenyl diphosphate</name>
        <dbReference type="ChEBI" id="CHEBI:128769"/>
    </ligand>
</feature>
<feature type="binding site" evidence="1">
    <location>
        <position position="78"/>
    </location>
    <ligand>
        <name>(2E)-4-hydroxy-3-methylbut-2-enyl diphosphate</name>
        <dbReference type="ChEBI" id="CHEBI:128753"/>
    </ligand>
</feature>
<feature type="binding site" evidence="1">
    <location>
        <position position="78"/>
    </location>
    <ligand>
        <name>dimethylallyl diphosphate</name>
        <dbReference type="ChEBI" id="CHEBI:57623"/>
    </ligand>
</feature>
<feature type="binding site" evidence="1">
    <location>
        <position position="78"/>
    </location>
    <ligand>
        <name>isopentenyl diphosphate</name>
        <dbReference type="ChEBI" id="CHEBI:128769"/>
    </ligand>
</feature>
<feature type="binding site" evidence="1">
    <location>
        <position position="100"/>
    </location>
    <ligand>
        <name>[4Fe-4S] cluster</name>
        <dbReference type="ChEBI" id="CHEBI:49883"/>
    </ligand>
</feature>
<feature type="binding site" evidence="1">
    <location>
        <position position="128"/>
    </location>
    <ligand>
        <name>(2E)-4-hydroxy-3-methylbut-2-enyl diphosphate</name>
        <dbReference type="ChEBI" id="CHEBI:128753"/>
    </ligand>
</feature>
<feature type="binding site" evidence="1">
    <location>
        <position position="128"/>
    </location>
    <ligand>
        <name>dimethylallyl diphosphate</name>
        <dbReference type="ChEBI" id="CHEBI:57623"/>
    </ligand>
</feature>
<feature type="binding site" evidence="1">
    <location>
        <position position="128"/>
    </location>
    <ligand>
        <name>isopentenyl diphosphate</name>
        <dbReference type="ChEBI" id="CHEBI:128769"/>
    </ligand>
</feature>
<feature type="binding site" evidence="1">
    <location>
        <position position="171"/>
    </location>
    <ligand>
        <name>(2E)-4-hydroxy-3-methylbut-2-enyl diphosphate</name>
        <dbReference type="ChEBI" id="CHEBI:128753"/>
    </ligand>
</feature>
<feature type="binding site" evidence="1">
    <location>
        <position position="200"/>
    </location>
    <ligand>
        <name>[4Fe-4S] cluster</name>
        <dbReference type="ChEBI" id="CHEBI:49883"/>
    </ligand>
</feature>
<feature type="binding site" evidence="1">
    <location>
        <position position="228"/>
    </location>
    <ligand>
        <name>(2E)-4-hydroxy-3-methylbut-2-enyl diphosphate</name>
        <dbReference type="ChEBI" id="CHEBI:128753"/>
    </ligand>
</feature>
<feature type="binding site" evidence="1">
    <location>
        <position position="228"/>
    </location>
    <ligand>
        <name>dimethylallyl diphosphate</name>
        <dbReference type="ChEBI" id="CHEBI:57623"/>
    </ligand>
</feature>
<feature type="binding site" evidence="1">
    <location>
        <position position="228"/>
    </location>
    <ligand>
        <name>isopentenyl diphosphate</name>
        <dbReference type="ChEBI" id="CHEBI:128769"/>
    </ligand>
</feature>
<feature type="binding site" evidence="1">
    <location>
        <position position="229"/>
    </location>
    <ligand>
        <name>(2E)-4-hydroxy-3-methylbut-2-enyl diphosphate</name>
        <dbReference type="ChEBI" id="CHEBI:128753"/>
    </ligand>
</feature>
<feature type="binding site" evidence="1">
    <location>
        <position position="229"/>
    </location>
    <ligand>
        <name>dimethylallyl diphosphate</name>
        <dbReference type="ChEBI" id="CHEBI:57623"/>
    </ligand>
</feature>
<feature type="binding site" evidence="1">
    <location>
        <position position="229"/>
    </location>
    <ligand>
        <name>isopentenyl diphosphate</name>
        <dbReference type="ChEBI" id="CHEBI:128769"/>
    </ligand>
</feature>
<feature type="binding site" evidence="1">
    <location>
        <position position="230"/>
    </location>
    <ligand>
        <name>(2E)-4-hydroxy-3-methylbut-2-enyl diphosphate</name>
        <dbReference type="ChEBI" id="CHEBI:128753"/>
    </ligand>
</feature>
<feature type="binding site" evidence="1">
    <location>
        <position position="230"/>
    </location>
    <ligand>
        <name>dimethylallyl diphosphate</name>
        <dbReference type="ChEBI" id="CHEBI:57623"/>
    </ligand>
</feature>
<feature type="binding site" evidence="1">
    <location>
        <position position="230"/>
    </location>
    <ligand>
        <name>isopentenyl diphosphate</name>
        <dbReference type="ChEBI" id="CHEBI:128769"/>
    </ligand>
</feature>
<feature type="binding site" evidence="1">
    <location>
        <position position="270"/>
    </location>
    <ligand>
        <name>(2E)-4-hydroxy-3-methylbut-2-enyl diphosphate</name>
        <dbReference type="ChEBI" id="CHEBI:128753"/>
    </ligand>
</feature>
<feature type="binding site" evidence="1">
    <location>
        <position position="270"/>
    </location>
    <ligand>
        <name>dimethylallyl diphosphate</name>
        <dbReference type="ChEBI" id="CHEBI:57623"/>
    </ligand>
</feature>
<feature type="binding site" evidence="1">
    <location>
        <position position="270"/>
    </location>
    <ligand>
        <name>isopentenyl diphosphate</name>
        <dbReference type="ChEBI" id="CHEBI:128769"/>
    </ligand>
</feature>
<protein>
    <recommendedName>
        <fullName evidence="1">4-hydroxy-3-methylbut-2-enyl diphosphate reductase</fullName>
        <shortName evidence="1">HMBPP reductase</shortName>
        <ecNumber evidence="1">1.17.7.4</ecNumber>
    </recommendedName>
</protein>